<keyword id="KW-1185">Reference proteome</keyword>
<accession>Q45U48</accession>
<accession>D6VUH2</accession>
<dbReference type="EMBL" id="DQ115390">
    <property type="protein sequence ID" value="AAZ22451.1"/>
    <property type="molecule type" value="Genomic_DNA"/>
</dbReference>
<dbReference type="EMBL" id="Z72820">
    <property type="status" value="NOT_ANNOTATED_CDS"/>
    <property type="molecule type" value="Genomic_DNA"/>
</dbReference>
<dbReference type="EMBL" id="BK006941">
    <property type="protein sequence ID" value="DAA08133.1"/>
    <property type="molecule type" value="Genomic_DNA"/>
</dbReference>
<dbReference type="RefSeq" id="NP_878077.1">
    <property type="nucleotide sequence ID" value="NM_001184648.1"/>
</dbReference>
<dbReference type="BioGRID" id="36999">
    <property type="interactions" value="24"/>
</dbReference>
<dbReference type="FunCoup" id="Q45U48">
    <property type="interactions" value="39"/>
</dbReference>
<dbReference type="PaxDb" id="4932-YGR035W-A"/>
<dbReference type="EnsemblFungi" id="YGR035W-A_mRNA">
    <property type="protein sequence ID" value="YGR035W-A"/>
    <property type="gene ID" value="YGR035W-A"/>
</dbReference>
<dbReference type="GeneID" id="1466457"/>
<dbReference type="KEGG" id="sce:YGR035W-A"/>
<dbReference type="AGR" id="SGD:S000028827"/>
<dbReference type="SGD" id="S000028827">
    <property type="gene designation" value="YGR035W-A"/>
</dbReference>
<dbReference type="VEuPathDB" id="FungiDB:YGR035W-A"/>
<dbReference type="HOGENOM" id="CLU_2706681_0_0_1"/>
<dbReference type="InParanoid" id="Q45U48"/>
<dbReference type="OrthoDB" id="10283852at2759"/>
<dbReference type="BioCyc" id="YEAST:G3O-31021-MONOMER"/>
<dbReference type="BioGRID-ORCS" id="1466457">
    <property type="hits" value="0 hits in 10 CRISPR screens"/>
</dbReference>
<dbReference type="PRO" id="PR:Q45U48"/>
<dbReference type="Proteomes" id="UP000002311">
    <property type="component" value="Chromosome VII"/>
</dbReference>
<dbReference type="RNAct" id="Q45U48">
    <property type="molecule type" value="protein"/>
</dbReference>
<gene>
    <name type="ordered locus">YGR035W-A</name>
</gene>
<sequence length="73" mass="8362">MLLYLYILYIALKTVSHLFFCNPCFRNLSVGDMLNPRLSLSFFTNHLLCPEAPLIIRGKGSYSAVGNFFSRKK</sequence>
<organism>
    <name type="scientific">Saccharomyces cerevisiae (strain ATCC 204508 / S288c)</name>
    <name type="common">Baker's yeast</name>
    <dbReference type="NCBI Taxonomy" id="559292"/>
    <lineage>
        <taxon>Eukaryota</taxon>
        <taxon>Fungi</taxon>
        <taxon>Dikarya</taxon>
        <taxon>Ascomycota</taxon>
        <taxon>Saccharomycotina</taxon>
        <taxon>Saccharomycetes</taxon>
        <taxon>Saccharomycetales</taxon>
        <taxon>Saccharomycetaceae</taxon>
        <taxon>Saccharomyces</taxon>
    </lineage>
</organism>
<proteinExistence type="evidence at protein level"/>
<reference key="1">
    <citation type="journal article" date="2005" name="Nat. Genet.">
        <title>Quantitative trait loci mapped to single-nucleotide resolution in yeast.</title>
        <authorList>
            <person name="Deutschbauer A.M."/>
            <person name="Davis R.W."/>
        </authorList>
    </citation>
    <scope>NUCLEOTIDE SEQUENCE [GENOMIC DNA]</scope>
    <source>
        <strain>SK1</strain>
    </source>
</reference>
<reference key="2">
    <citation type="journal article" date="1997" name="Nature">
        <title>The nucleotide sequence of Saccharomyces cerevisiae chromosome VII.</title>
        <authorList>
            <person name="Tettelin H."/>
            <person name="Agostoni-Carbone M.L."/>
            <person name="Albermann K."/>
            <person name="Albers M."/>
            <person name="Arroyo J."/>
            <person name="Backes U."/>
            <person name="Barreiros T."/>
            <person name="Bertani I."/>
            <person name="Bjourson A.J."/>
            <person name="Brueckner M."/>
            <person name="Bruschi C.V."/>
            <person name="Carignani G."/>
            <person name="Castagnoli L."/>
            <person name="Cerdan E."/>
            <person name="Clemente M.L."/>
            <person name="Coblenz A."/>
            <person name="Coglievina M."/>
            <person name="Coissac E."/>
            <person name="Defoor E."/>
            <person name="Del Bino S."/>
            <person name="Delius H."/>
            <person name="Delneri D."/>
            <person name="de Wergifosse P."/>
            <person name="Dujon B."/>
            <person name="Durand P."/>
            <person name="Entian K.-D."/>
            <person name="Eraso P."/>
            <person name="Escribano V."/>
            <person name="Fabiani L."/>
            <person name="Fartmann B."/>
            <person name="Feroli F."/>
            <person name="Feuermann M."/>
            <person name="Frontali L."/>
            <person name="Garcia-Gonzalez M."/>
            <person name="Garcia-Saez M.I."/>
            <person name="Goffeau A."/>
            <person name="Guerreiro P."/>
            <person name="Hani J."/>
            <person name="Hansen M."/>
            <person name="Hebling U."/>
            <person name="Hernandez K."/>
            <person name="Heumann K."/>
            <person name="Hilger F."/>
            <person name="Hofmann B."/>
            <person name="Indge K.J."/>
            <person name="James C.M."/>
            <person name="Klima R."/>
            <person name="Koetter P."/>
            <person name="Kramer B."/>
            <person name="Kramer W."/>
            <person name="Lauquin G."/>
            <person name="Leuther H."/>
            <person name="Louis E.J."/>
            <person name="Maillier E."/>
            <person name="Marconi A."/>
            <person name="Martegani E."/>
            <person name="Mazon M.J."/>
            <person name="Mazzoni C."/>
            <person name="McReynolds A.D.K."/>
            <person name="Melchioretto P."/>
            <person name="Mewes H.-W."/>
            <person name="Minenkova O."/>
            <person name="Mueller-Auer S."/>
            <person name="Nawrocki A."/>
            <person name="Netter P."/>
            <person name="Neu R."/>
            <person name="Nombela C."/>
            <person name="Oliver S.G."/>
            <person name="Panzeri L."/>
            <person name="Paoluzi S."/>
            <person name="Plevani P."/>
            <person name="Portetelle D."/>
            <person name="Portillo F."/>
            <person name="Potier S."/>
            <person name="Purnelle B."/>
            <person name="Rieger M."/>
            <person name="Riles L."/>
            <person name="Rinaldi T."/>
            <person name="Robben J."/>
            <person name="Rodrigues-Pousada C."/>
            <person name="Rodriguez-Belmonte E."/>
            <person name="Rodriguez-Torres A.M."/>
            <person name="Rose M."/>
            <person name="Ruzzi M."/>
            <person name="Saliola M."/>
            <person name="Sanchez-Perez M."/>
            <person name="Schaefer B."/>
            <person name="Schaefer M."/>
            <person name="Scharfe M."/>
            <person name="Schmidheini T."/>
            <person name="Schreer A."/>
            <person name="Skala J."/>
            <person name="Souciet J.-L."/>
            <person name="Steensma H.Y."/>
            <person name="Talla E."/>
            <person name="Thierry A."/>
            <person name="Vandenbol M."/>
            <person name="van der Aart Q.J.M."/>
            <person name="Van Dyck L."/>
            <person name="Vanoni M."/>
            <person name="Verhasselt P."/>
            <person name="Voet M."/>
            <person name="Volckaert G."/>
            <person name="Wambutt R."/>
            <person name="Watson M.D."/>
            <person name="Weber N."/>
            <person name="Wedler E."/>
            <person name="Wedler H."/>
            <person name="Wipfli P."/>
            <person name="Wolf K."/>
            <person name="Wright L.F."/>
            <person name="Zaccaria P."/>
            <person name="Zimmermann M."/>
            <person name="Zollner A."/>
            <person name="Kleine K."/>
        </authorList>
    </citation>
    <scope>NUCLEOTIDE SEQUENCE [LARGE SCALE GENOMIC DNA]</scope>
    <source>
        <strain>ATCC 204508 / S288c</strain>
    </source>
</reference>
<reference key="3">
    <citation type="journal article" date="2014" name="G3 (Bethesda)">
        <title>The reference genome sequence of Saccharomyces cerevisiae: Then and now.</title>
        <authorList>
            <person name="Engel S.R."/>
            <person name="Dietrich F.S."/>
            <person name="Fisk D.G."/>
            <person name="Binkley G."/>
            <person name="Balakrishnan R."/>
            <person name="Costanzo M.C."/>
            <person name="Dwight S.S."/>
            <person name="Hitz B.C."/>
            <person name="Karra K."/>
            <person name="Nash R.S."/>
            <person name="Weng S."/>
            <person name="Wong E.D."/>
            <person name="Lloyd P."/>
            <person name="Skrzypek M.S."/>
            <person name="Miyasato S.R."/>
            <person name="Simison M."/>
            <person name="Cherry J.M."/>
        </authorList>
    </citation>
    <scope>GENOME REANNOTATION</scope>
    <source>
        <strain>ATCC 204508 / S288c</strain>
    </source>
</reference>
<reference key="4">
    <citation type="journal article" date="2002" name="Genome Res.">
        <title>Parallel identification of new genes in Saccharomyces cerevisiae.</title>
        <authorList>
            <person name="Oshiro G."/>
            <person name="Wodicka L.M."/>
            <person name="Washburn M.P."/>
            <person name="Yates J.R. III"/>
            <person name="Lockhart D.J."/>
            <person name="Winzeler E.A."/>
        </authorList>
    </citation>
    <scope>IDENTIFICATION BY MASS SPECTROMETRY</scope>
</reference>
<protein>
    <recommendedName>
        <fullName>Uncharacterized protein YGR035W-A</fullName>
    </recommendedName>
</protein>
<name>YG035_YEAST</name>
<feature type="chain" id="PRO_0000245382" description="Uncharacterized protein YGR035W-A">
    <location>
        <begin position="1"/>
        <end position="73"/>
    </location>
</feature>